<organism>
    <name type="scientific">Arabidopsis thaliana</name>
    <name type="common">Mouse-ear cress</name>
    <dbReference type="NCBI Taxonomy" id="3702"/>
    <lineage>
        <taxon>Eukaryota</taxon>
        <taxon>Viridiplantae</taxon>
        <taxon>Streptophyta</taxon>
        <taxon>Embryophyta</taxon>
        <taxon>Tracheophyta</taxon>
        <taxon>Spermatophyta</taxon>
        <taxon>Magnoliopsida</taxon>
        <taxon>eudicotyledons</taxon>
        <taxon>Gunneridae</taxon>
        <taxon>Pentapetalae</taxon>
        <taxon>rosids</taxon>
        <taxon>malvids</taxon>
        <taxon>Brassicales</taxon>
        <taxon>Brassicaceae</taxon>
        <taxon>Camelineae</taxon>
        <taxon>Arabidopsis</taxon>
    </lineage>
</organism>
<comment type="function">
    <text evidence="5">Involved in glutamate biosynthesis. Required for non-photorespiratory ammonium assimilation. Probably involved in primary ammonium assimilation in roots.</text>
</comment>
<comment type="catalytic activity">
    <reaction>
        <text>2 L-glutamate + NAD(+) = L-glutamine + 2-oxoglutarate + NADH + H(+)</text>
        <dbReference type="Rhea" id="RHEA:13753"/>
        <dbReference type="ChEBI" id="CHEBI:15378"/>
        <dbReference type="ChEBI" id="CHEBI:16810"/>
        <dbReference type="ChEBI" id="CHEBI:29985"/>
        <dbReference type="ChEBI" id="CHEBI:57540"/>
        <dbReference type="ChEBI" id="CHEBI:57945"/>
        <dbReference type="ChEBI" id="CHEBI:58359"/>
        <dbReference type="EC" id="1.4.1.14"/>
    </reaction>
</comment>
<comment type="cofactor">
    <cofactor evidence="1">
        <name>[3Fe-4S] cluster</name>
        <dbReference type="ChEBI" id="CHEBI:21137"/>
    </cofactor>
    <text evidence="1">Binds 1 [3Fe-4S] cluster.</text>
</comment>
<comment type="cofactor">
    <cofactor evidence="1">
        <name>FAD</name>
        <dbReference type="ChEBI" id="CHEBI:57692"/>
    </cofactor>
</comment>
<comment type="cofactor">
    <cofactor evidence="1">
        <name>FMN</name>
        <dbReference type="ChEBI" id="CHEBI:58210"/>
    </cofactor>
</comment>
<comment type="pathway">
    <text>Amino-acid biosynthesis; L-glutamate biosynthesis via GLT pathway; L-glutamate from 2-oxoglutarate and L-glutamine (NAD(+) route): step 1/1.</text>
</comment>
<comment type="pathway">
    <text>Energy metabolism; nitrogen metabolism.</text>
</comment>
<comment type="subunit">
    <text evidence="1">Monomer.</text>
</comment>
<comment type="subcellular location">
    <subcellularLocation>
        <location evidence="7">Plastid</location>
        <location evidence="7">Chloroplast</location>
    </subcellularLocation>
</comment>
<comment type="tissue specificity">
    <text evidence="5">Highly expressed in roots and at low levels in leaves.</text>
</comment>
<comment type="induction">
    <text evidence="6">Induced by cadmium.</text>
</comment>
<comment type="disruption phenotype">
    <text evidence="5">Defect in growth and glutamate biosynthesis under non-photorespiratory conditions.</text>
</comment>
<comment type="similarity">
    <text evidence="8">Belongs to the glutamate synthase family.</text>
</comment>
<comment type="sequence caution" evidence="8">
    <conflict type="erroneous gene model prediction">
        <sequence resource="EMBL-CDS" id="BAA97323"/>
    </conflict>
</comment>
<accession>Q9LV03</accession>
<accession>Q0WL27</accession>
<accession>Q56W62</accession>
<accession>Q8LPH2</accession>
<keyword id="KW-0003">3Fe-4S</keyword>
<keyword id="KW-0028">Amino-acid biosynthesis</keyword>
<keyword id="KW-0150">Chloroplast</keyword>
<keyword id="KW-0274">FAD</keyword>
<keyword id="KW-0285">Flavoprotein</keyword>
<keyword id="KW-0288">FMN</keyword>
<keyword id="KW-0314">Glutamate biosynthesis</keyword>
<keyword id="KW-0315">Glutamine amidotransferase</keyword>
<keyword id="KW-0408">Iron</keyword>
<keyword id="KW-0411">Iron-sulfur</keyword>
<keyword id="KW-0479">Metal-binding</keyword>
<keyword id="KW-0520">NAD</keyword>
<keyword id="KW-0560">Oxidoreductase</keyword>
<keyword id="KW-0934">Plastid</keyword>
<keyword id="KW-1185">Reference proteome</keyword>
<keyword id="KW-0809">Transit peptide</keyword>
<dbReference type="EC" id="1.4.1.14"/>
<dbReference type="EMBL" id="AB020754">
    <property type="protein sequence ID" value="BAA97323.1"/>
    <property type="status" value="ALT_SEQ"/>
    <property type="molecule type" value="Genomic_DNA"/>
</dbReference>
<dbReference type="EMBL" id="CP002688">
    <property type="protein sequence ID" value="AED96358.1"/>
    <property type="molecule type" value="Genomic_DNA"/>
</dbReference>
<dbReference type="EMBL" id="CP002688">
    <property type="protein sequence ID" value="AED96359.1"/>
    <property type="molecule type" value="Genomic_DNA"/>
</dbReference>
<dbReference type="EMBL" id="CP002688">
    <property type="protein sequence ID" value="AED96360.1"/>
    <property type="molecule type" value="Genomic_DNA"/>
</dbReference>
<dbReference type="EMBL" id="AY099795">
    <property type="protein sequence ID" value="AAM20646.1"/>
    <property type="molecule type" value="mRNA"/>
</dbReference>
<dbReference type="EMBL" id="AK222185">
    <property type="protein sequence ID" value="BAD95320.1"/>
    <property type="molecule type" value="mRNA"/>
</dbReference>
<dbReference type="EMBL" id="AK230382">
    <property type="protein sequence ID" value="BAF02180.1"/>
    <property type="molecule type" value="mRNA"/>
</dbReference>
<dbReference type="RefSeq" id="NP_001190529.1">
    <property type="nucleotide sequence ID" value="NM_001203600.1"/>
</dbReference>
<dbReference type="RefSeq" id="NP_001190530.1">
    <property type="nucleotide sequence ID" value="NM_001203601.1"/>
</dbReference>
<dbReference type="RefSeq" id="NP_200158.2">
    <property type="nucleotide sequence ID" value="NM_124725.5"/>
</dbReference>
<dbReference type="SMR" id="Q9LV03"/>
<dbReference type="BioGRID" id="20672">
    <property type="interactions" value="2"/>
</dbReference>
<dbReference type="FunCoup" id="Q9LV03">
    <property type="interactions" value="1935"/>
</dbReference>
<dbReference type="IntAct" id="Q9LV03">
    <property type="interactions" value="2"/>
</dbReference>
<dbReference type="STRING" id="3702.Q9LV03"/>
<dbReference type="iPTMnet" id="Q9LV03"/>
<dbReference type="MetOSite" id="Q9LV03"/>
<dbReference type="PaxDb" id="3702-AT5G53460.1"/>
<dbReference type="ProteomicsDB" id="230406"/>
<dbReference type="EnsemblPlants" id="AT5G53460.1">
    <property type="protein sequence ID" value="AT5G53460.1"/>
    <property type="gene ID" value="AT5G53460"/>
</dbReference>
<dbReference type="EnsemblPlants" id="AT5G53460.2">
    <property type="protein sequence ID" value="AT5G53460.2"/>
    <property type="gene ID" value="AT5G53460"/>
</dbReference>
<dbReference type="EnsemblPlants" id="AT5G53460.3">
    <property type="protein sequence ID" value="AT5G53460.3"/>
    <property type="gene ID" value="AT5G53460"/>
</dbReference>
<dbReference type="GeneID" id="835427"/>
<dbReference type="Gramene" id="AT5G53460.1">
    <property type="protein sequence ID" value="AT5G53460.1"/>
    <property type="gene ID" value="AT5G53460"/>
</dbReference>
<dbReference type="Gramene" id="AT5G53460.2">
    <property type="protein sequence ID" value="AT5G53460.2"/>
    <property type="gene ID" value="AT5G53460"/>
</dbReference>
<dbReference type="Gramene" id="AT5G53460.3">
    <property type="protein sequence ID" value="AT5G53460.3"/>
    <property type="gene ID" value="AT5G53460"/>
</dbReference>
<dbReference type="KEGG" id="ath:AT5G53460"/>
<dbReference type="Araport" id="AT5G53460"/>
<dbReference type="TAIR" id="AT5G53460">
    <property type="gene designation" value="GLT1"/>
</dbReference>
<dbReference type="eggNOG" id="KOG0399">
    <property type="taxonomic scope" value="Eukaryota"/>
</dbReference>
<dbReference type="HOGENOM" id="CLU_000422_8_2_1"/>
<dbReference type="InParanoid" id="Q9LV03"/>
<dbReference type="OMA" id="WDGPAAM"/>
<dbReference type="PhylomeDB" id="Q9LV03"/>
<dbReference type="BioCyc" id="ARA:AT5G53460-MONOMER"/>
<dbReference type="BRENDA" id="1.4.1.14">
    <property type="organism ID" value="399"/>
</dbReference>
<dbReference type="UniPathway" id="UPA00045"/>
<dbReference type="UniPathway" id="UPA00634">
    <property type="reaction ID" value="UER00690"/>
</dbReference>
<dbReference type="CD-CODE" id="4299E36E">
    <property type="entry name" value="Nucleolus"/>
</dbReference>
<dbReference type="PRO" id="PR:Q9LV03"/>
<dbReference type="Proteomes" id="UP000006548">
    <property type="component" value="Chromosome 5"/>
</dbReference>
<dbReference type="ExpressionAtlas" id="Q9LV03">
    <property type="expression patterns" value="baseline and differential"/>
</dbReference>
<dbReference type="GO" id="GO:0009507">
    <property type="term" value="C:chloroplast"/>
    <property type="evidence" value="ECO:0007005"/>
    <property type="project" value="TAIR"/>
</dbReference>
<dbReference type="GO" id="GO:0009570">
    <property type="term" value="C:chloroplast stroma"/>
    <property type="evidence" value="ECO:0007005"/>
    <property type="project" value="TAIR"/>
</dbReference>
<dbReference type="GO" id="GO:0009536">
    <property type="term" value="C:plastid"/>
    <property type="evidence" value="ECO:0007005"/>
    <property type="project" value="TAIR"/>
</dbReference>
<dbReference type="GO" id="GO:0051538">
    <property type="term" value="F:3 iron, 4 sulfur cluster binding"/>
    <property type="evidence" value="ECO:0007669"/>
    <property type="project" value="UniProtKB-KW"/>
</dbReference>
<dbReference type="GO" id="GO:0050660">
    <property type="term" value="F:flavin adenine dinucleotide binding"/>
    <property type="evidence" value="ECO:0007669"/>
    <property type="project" value="InterPro"/>
</dbReference>
<dbReference type="GO" id="GO:0010181">
    <property type="term" value="F:FMN binding"/>
    <property type="evidence" value="ECO:0007669"/>
    <property type="project" value="InterPro"/>
</dbReference>
<dbReference type="GO" id="GO:0016040">
    <property type="term" value="F:glutamate synthase (NADH) activity"/>
    <property type="evidence" value="ECO:0000314"/>
    <property type="project" value="TAIR"/>
</dbReference>
<dbReference type="GO" id="GO:0005506">
    <property type="term" value="F:iron ion binding"/>
    <property type="evidence" value="ECO:0007669"/>
    <property type="project" value="InterPro"/>
</dbReference>
<dbReference type="GO" id="GO:0016639">
    <property type="term" value="F:oxidoreductase activity, acting on the CH-NH2 group of donors, NAD or NADP as acceptor"/>
    <property type="evidence" value="ECO:0007669"/>
    <property type="project" value="InterPro"/>
</dbReference>
<dbReference type="GO" id="GO:0019676">
    <property type="term" value="P:ammonia assimilation cycle"/>
    <property type="evidence" value="ECO:0000315"/>
    <property type="project" value="UniProtKB"/>
</dbReference>
<dbReference type="GO" id="GO:0048589">
    <property type="term" value="P:developmental growth"/>
    <property type="evidence" value="ECO:0000315"/>
    <property type="project" value="UniProtKB"/>
</dbReference>
<dbReference type="GO" id="GO:0006537">
    <property type="term" value="P:glutamate biosynthetic process"/>
    <property type="evidence" value="ECO:0000314"/>
    <property type="project" value="TAIR"/>
</dbReference>
<dbReference type="GO" id="GO:0097054">
    <property type="term" value="P:L-glutamate biosynthetic process"/>
    <property type="evidence" value="ECO:0007669"/>
    <property type="project" value="UniProtKB-UniPathway"/>
</dbReference>
<dbReference type="CDD" id="cd00982">
    <property type="entry name" value="gltB_C"/>
    <property type="match status" value="1"/>
</dbReference>
<dbReference type="CDD" id="cd00713">
    <property type="entry name" value="GltS"/>
    <property type="match status" value="1"/>
</dbReference>
<dbReference type="CDD" id="cd02808">
    <property type="entry name" value="GltS_FMN"/>
    <property type="match status" value="1"/>
</dbReference>
<dbReference type="FunFam" id="3.20.20.70:FF:000031">
    <property type="entry name" value="Glutamate synthase 1 [NADH]"/>
    <property type="match status" value="1"/>
</dbReference>
<dbReference type="FunFam" id="1.10.1060.10:FF:000009">
    <property type="entry name" value="Glutamate synthase 1 [NADH] chloroplastic"/>
    <property type="match status" value="1"/>
</dbReference>
<dbReference type="FunFam" id="3.60.20.10:FF:000043">
    <property type="entry name" value="Glutamate synthase 1 [NADH] chloroplastic"/>
    <property type="match status" value="1"/>
</dbReference>
<dbReference type="FunFam" id="3.20.20.70:FF:000017">
    <property type="entry name" value="Glutamate synthase [NADH], amyloplastic"/>
    <property type="match status" value="1"/>
</dbReference>
<dbReference type="FunFam" id="3.40.50.720:FF:000113">
    <property type="entry name" value="Glutamate synthase [NADH], amyloplastic"/>
    <property type="match status" value="1"/>
</dbReference>
<dbReference type="FunFam" id="3.50.50.60:FF:000022">
    <property type="entry name" value="Glutamate synthase [NADH], amyloplastic"/>
    <property type="match status" value="1"/>
</dbReference>
<dbReference type="FunFam" id="2.160.20.60:FF:000001">
    <property type="entry name" value="Glutamate synthase, large subunit"/>
    <property type="match status" value="1"/>
</dbReference>
<dbReference type="Gene3D" id="3.20.20.70">
    <property type="entry name" value="Aldolase class I"/>
    <property type="match status" value="2"/>
</dbReference>
<dbReference type="Gene3D" id="1.10.1060.10">
    <property type="entry name" value="Alpha-helical ferredoxin"/>
    <property type="match status" value="1"/>
</dbReference>
<dbReference type="Gene3D" id="3.50.50.60">
    <property type="entry name" value="FAD/NAD(P)-binding domain"/>
    <property type="match status" value="1"/>
</dbReference>
<dbReference type="Gene3D" id="2.160.20.60">
    <property type="entry name" value="Glutamate synthase, alpha subunit, C-terminal domain"/>
    <property type="match status" value="1"/>
</dbReference>
<dbReference type="Gene3D" id="3.60.20.10">
    <property type="entry name" value="Glutamine Phosphoribosylpyrophosphate, subunit 1, domain 1"/>
    <property type="match status" value="1"/>
</dbReference>
<dbReference type="Gene3D" id="3.40.50.720">
    <property type="entry name" value="NAD(P)-binding Rossmann-like Domain"/>
    <property type="match status" value="1"/>
</dbReference>
<dbReference type="InterPro" id="IPR013785">
    <property type="entry name" value="Aldolase_TIM"/>
</dbReference>
<dbReference type="InterPro" id="IPR028261">
    <property type="entry name" value="DPD_II"/>
</dbReference>
<dbReference type="InterPro" id="IPR036188">
    <property type="entry name" value="FAD/NAD-bd_sf"/>
</dbReference>
<dbReference type="InterPro" id="IPR023753">
    <property type="entry name" value="FAD/NAD-binding_dom"/>
</dbReference>
<dbReference type="InterPro" id="IPR017932">
    <property type="entry name" value="GATase_2_dom"/>
</dbReference>
<dbReference type="InterPro" id="IPR002489">
    <property type="entry name" value="Glu_synth_asu_C"/>
</dbReference>
<dbReference type="InterPro" id="IPR036485">
    <property type="entry name" value="Glu_synth_asu_C_sf"/>
</dbReference>
<dbReference type="InterPro" id="IPR006982">
    <property type="entry name" value="Glu_synth_centr_N"/>
</dbReference>
<dbReference type="InterPro" id="IPR012220">
    <property type="entry name" value="Glu_synth_euk"/>
</dbReference>
<dbReference type="InterPro" id="IPR002932">
    <property type="entry name" value="Glu_synthdom"/>
</dbReference>
<dbReference type="InterPro" id="IPR006005">
    <property type="entry name" value="Glut_synth_ssu1"/>
</dbReference>
<dbReference type="InterPro" id="IPR051394">
    <property type="entry name" value="Glutamate_Synthase"/>
</dbReference>
<dbReference type="InterPro" id="IPR009051">
    <property type="entry name" value="Helical_ferredxn"/>
</dbReference>
<dbReference type="InterPro" id="IPR029055">
    <property type="entry name" value="Ntn_hydrolases_N"/>
</dbReference>
<dbReference type="NCBIfam" id="TIGR01317">
    <property type="entry name" value="GOGAT_sm_gam"/>
    <property type="match status" value="1"/>
</dbReference>
<dbReference type="NCBIfam" id="NF008730">
    <property type="entry name" value="PRK11750.1"/>
    <property type="match status" value="1"/>
</dbReference>
<dbReference type="PANTHER" id="PTHR43100">
    <property type="entry name" value="GLUTAMATE SYNTHASE [NADPH] SMALL CHAIN"/>
    <property type="match status" value="1"/>
</dbReference>
<dbReference type="PANTHER" id="PTHR43100:SF1">
    <property type="entry name" value="GLUTAMATE SYNTHASE [NADPH] SMALL CHAIN"/>
    <property type="match status" value="1"/>
</dbReference>
<dbReference type="Pfam" id="PF14691">
    <property type="entry name" value="Fer4_20"/>
    <property type="match status" value="1"/>
</dbReference>
<dbReference type="Pfam" id="PF00310">
    <property type="entry name" value="GATase_2"/>
    <property type="match status" value="1"/>
</dbReference>
<dbReference type="Pfam" id="PF04898">
    <property type="entry name" value="Glu_syn_central"/>
    <property type="match status" value="1"/>
</dbReference>
<dbReference type="Pfam" id="PF01645">
    <property type="entry name" value="Glu_synthase"/>
    <property type="match status" value="1"/>
</dbReference>
<dbReference type="Pfam" id="PF01493">
    <property type="entry name" value="GXGXG"/>
    <property type="match status" value="1"/>
</dbReference>
<dbReference type="Pfam" id="PF07992">
    <property type="entry name" value="Pyr_redox_2"/>
    <property type="match status" value="1"/>
</dbReference>
<dbReference type="PIRSF" id="PIRSF000187">
    <property type="entry name" value="GOGAT"/>
    <property type="match status" value="1"/>
</dbReference>
<dbReference type="PRINTS" id="PR00419">
    <property type="entry name" value="ADXRDTASE"/>
</dbReference>
<dbReference type="SUPFAM" id="SSF69336">
    <property type="entry name" value="Alpha subunit of glutamate synthase, C-terminal domain"/>
    <property type="match status" value="1"/>
</dbReference>
<dbReference type="SUPFAM" id="SSF46548">
    <property type="entry name" value="alpha-helical ferredoxin"/>
    <property type="match status" value="1"/>
</dbReference>
<dbReference type="SUPFAM" id="SSF51395">
    <property type="entry name" value="FMN-linked oxidoreductases"/>
    <property type="match status" value="1"/>
</dbReference>
<dbReference type="SUPFAM" id="SSF56235">
    <property type="entry name" value="N-terminal nucleophile aminohydrolases (Ntn hydrolases)"/>
    <property type="match status" value="1"/>
</dbReference>
<dbReference type="SUPFAM" id="SSF51971">
    <property type="entry name" value="Nucleotide-binding domain"/>
    <property type="match status" value="1"/>
</dbReference>
<dbReference type="PROSITE" id="PS51278">
    <property type="entry name" value="GATASE_TYPE_2"/>
    <property type="match status" value="1"/>
</dbReference>
<feature type="transit peptide" description="Chloroplast" evidence="2">
    <location>
        <begin position="1"/>
        <end position="49"/>
    </location>
</feature>
<feature type="chain" id="PRO_0000395200" description="Glutamate synthase 1 [NADH], chloroplastic">
    <location>
        <begin position="50"/>
        <end position="2208"/>
    </location>
</feature>
<feature type="domain" description="Glutamine amidotransferase type-2" evidence="3">
    <location>
        <begin position="117"/>
        <end position="521"/>
    </location>
</feature>
<feature type="region of interest" description="Disordered" evidence="4">
    <location>
        <begin position="1040"/>
        <end position="1067"/>
    </location>
</feature>
<feature type="active site" description="Nucleophile" evidence="3">
    <location>
        <position position="117"/>
    </location>
</feature>
<feature type="binding site" evidence="1">
    <location>
        <begin position="1211"/>
        <end position="1268"/>
    </location>
    <ligand>
        <name>FMN</name>
        <dbReference type="ChEBI" id="CHEBI:58210"/>
    </ligand>
</feature>
<feature type="binding site" evidence="1">
    <location>
        <position position="1264"/>
    </location>
    <ligand>
        <name>[3Fe-4S] cluster</name>
        <dbReference type="ChEBI" id="CHEBI:21137"/>
    </ligand>
</feature>
<feature type="binding site" evidence="1">
    <location>
        <position position="1270"/>
    </location>
    <ligand>
        <name>[3Fe-4S] cluster</name>
        <dbReference type="ChEBI" id="CHEBI:21137"/>
    </ligand>
</feature>
<feature type="binding site" evidence="1">
    <location>
        <position position="1275"/>
    </location>
    <ligand>
        <name>[3Fe-4S] cluster</name>
        <dbReference type="ChEBI" id="CHEBI:21137"/>
    </ligand>
</feature>
<feature type="binding site" evidence="2">
    <location>
        <begin position="1995"/>
        <end position="2009"/>
    </location>
    <ligand>
        <name>NAD(+)</name>
        <dbReference type="ChEBI" id="CHEBI:57540"/>
    </ligand>
</feature>
<feature type="sequence conflict" description="In Ref. 3; BAF02180." evidence="8" ref="3">
    <original>I</original>
    <variation>V</variation>
    <location>
        <position position="998"/>
    </location>
</feature>
<feature type="sequence conflict" description="In Ref. 3; BAF02180." evidence="8" ref="3">
    <original>G</original>
    <variation>R</variation>
    <location>
        <position position="1440"/>
    </location>
</feature>
<feature type="sequence conflict" description="In Ref. 4; AAM20646." evidence="8" ref="4">
    <original>D</original>
    <variation>V</variation>
    <location>
        <position position="2188"/>
    </location>
</feature>
<protein>
    <recommendedName>
        <fullName>Glutamate synthase 1 [NADH], chloroplastic</fullName>
        <ecNumber>1.4.1.14</ecNumber>
    </recommendedName>
    <alternativeName>
        <fullName>NADH-dependent glutamate synthase 1</fullName>
        <shortName>NADH-GOGAT 1</shortName>
    </alternativeName>
</protein>
<evidence type="ECO:0000250" key="1"/>
<evidence type="ECO:0000255" key="2"/>
<evidence type="ECO:0000255" key="3">
    <source>
        <dbReference type="PROSITE-ProRule" id="PRU00609"/>
    </source>
</evidence>
<evidence type="ECO:0000256" key="4">
    <source>
        <dbReference type="SAM" id="MobiDB-lite"/>
    </source>
</evidence>
<evidence type="ECO:0000269" key="5">
    <source>
    </source>
</evidence>
<evidence type="ECO:0000269" key="6">
    <source>
    </source>
</evidence>
<evidence type="ECO:0000269" key="7">
    <source>
    </source>
</evidence>
<evidence type="ECO:0000305" key="8"/>
<proteinExistence type="evidence at protein level"/>
<sequence>MSAASSSSVLHLRTNQQLLSLRSLKNSTSVASQLAVTSGVSRRRSCTARCSVKKPVIPESPFLGTRVRRSGSETLQFWRSDGPGRSAKLRTVVKSSFSAVPEKPLGLYDPSYDKDSCGVGFVAELSGETTRKTVTDSLEMLIRMTHRGACGCESNTGDGAGILVGLPHDFYAEAATELGFVLPSAGNYAVGMFFLPTVESRREESKNVFTKVAESLGHSVLGWRLVPTDNSGLGNSALQTEPIIAQVFLTPTTKSKADFEQQMYILRRVSMVAIRAALNLQHGAMKDFYICSLSSRTIVYKGQLKPDQLKDYYYADLGSERFTSYMALVHSRFSTNTFPSWDRAQPMRVLGHNGEINTLRGNVNWMRAREGLLKCNELGLSKKELKKLLPIVDVSSSDSGAFDGVLELLVRAGRSLPEAVMMMIPEAWQNDKNIDPSRKEFYEYLSALMEPWDGPALISFTDGRYLGATLDRNGLRPGRFYITHSGRVIMASEVGVVDVPPEDVMRKGRLNPGMMLLVDFEKHIVVDDDALKQQYSLARPYGEWLKRQKIELKDIIESVPEAERIAPSISGVVPASNDDDSMESMGIHGLLSPLKAFGYTVEALEMLLLPMAKDGSEALGSMGNDTPLAVMSNREKLCFEYFKQMFAQVTNPPIDPIREKIVTSMECMIGPEGDLTETTEEQCHRLSLKGPLLKIEEMEAIKKMNYRGWRTKVLDITYAKERGTKGLEETLDRICDEANEAIKEGYTLLVLSDRAFSATRVAVSSLMAVGAVHHHLVKTLARTQVGLVVESAEPREVHHFCTLVGFGADAICPYLAVEAVYRLQVDGKIPPKSNGEFHSKEELVKKYYKASNYGMMKVLAKMGISTLASYKGAQIFEALGLSSEVIQKCFAGTPSRVEGATFEMLARDGLQLHELAFPTRGYAPGSAEASALTNPGNYHWRKNGEIHLNDPLAIAKLQEAARTNSVAAYKEYSKRINELNKQSNLRGLMKFKDADVKIPLDEVEPASEIVKRFCTGAMSYGSISLEAHTTLAMAMNKLGGKSNTGEGGELPSRMEPLADGSRNPKRSSIKQIASGRFGVSSYYLTNADELQIKMAQGAKPGEGGELPGHKVIGDIAITRNSTAGVGLISPPPHHDIYSIEDLAQLIHDLKNANPGARISVKLVSEAGVGVIASGVVKGHADHVLIAGHDGGTGASRWTGIKNAGLPWELGLAETHQTLVANDLRGRTVLQTDGQLKTGRDVAVAALLGAEEFGFSTAPLITLGCIMMRKCHKNTCPVGIATQDPVLREKFAGEPEHVINFFFMLAEEVREIMSGLGFRTVTEMIGRADMLELDREVVKNNDKLENIDLSLLLRPAAEIRPGAAQYCVQKQDHGLDMALDQELIALSKSALEKSLPVYIETPICNVNRAVGTMLSHEVTKRYHLTGLPKDTIHIKFTGSAGQSLGAFLCPGIMLELEGDSNDYVGKGLSGGKVVVYPPKGSSFDPKENIVIGNVALYGATSGEAYFNGMAAERFSVRNSGAKAVVEGLGDHGCEYMTGGTVVVLGKTGRNFAAGMSGGIAYVLDVDGKFNTRCNLELVDLDKVEDEEDKMTLKMMIQQHQRHTNSQLAQEVLADFENLLPKFIKVFPRDYKRVLSAMKHEEVSKQAIERASEEADETEEKELEEKDAFAELKNMAAASSKEEMSGNGVAAEARPSKVDNAVKNGGFIAYEREGVKYRDPNVRLNDWNEVMEESKPGPLLTTQSARCMDCGTPFCHQENSGCPLGNKIPEFNELVYQNRWQEALNRLLETNNFPEFTGRVCPAPCEGSCVLGIIENPVSIKSIECAIIDKAFEEGWMVPRPPLKRTGKKVAIIGSGPAGLAAADQLNKMGHLVTVYERSDRIGGLMMYGVPNMKTDKIDVVQRRVDLMTKEGINFVVNANIGKDPSYSLDGLKEENDAIVLAVGSTKPRDLPVPGRDLSGVHFAMEFLHANTKSLLDSNHEDGNYISAKGKKVVVIGGGDTGTDCIGTSIRHGCTNIVNLELLPQPPSTRAPGNPWPQWPRVFRIDYGHQEATTKFGKDPRTYEVLTKRFIGDDNGNVKGLELVRVSWEKDETGRFQFKEIEGSEEIIEADLVFLAMGFLGPEPTLAEKLGLECDNRSNFKAEYGRFSTTVEGVFAAGDCRRGQSLVVWAISEGRQAADQVDKFLTKTDDDEDAKLQQDLNQMKHNTITN</sequence>
<name>GLUT1_ARATH</name>
<reference key="1">
    <citation type="journal article" date="2000" name="DNA Res.">
        <title>Structural analysis of Arabidopsis thaliana chromosome 5. X. Sequence features of the regions of 3,076,755 bp covered by sixty P1 and TAC clones.</title>
        <authorList>
            <person name="Sato S."/>
            <person name="Nakamura Y."/>
            <person name="Kaneko T."/>
            <person name="Katoh T."/>
            <person name="Asamizu E."/>
            <person name="Kotani H."/>
            <person name="Tabata S."/>
        </authorList>
    </citation>
    <scope>NUCLEOTIDE SEQUENCE [LARGE SCALE GENOMIC DNA]</scope>
    <source>
        <strain>cv. Columbia</strain>
    </source>
</reference>
<reference key="2">
    <citation type="journal article" date="2017" name="Plant J.">
        <title>Araport11: a complete reannotation of the Arabidopsis thaliana reference genome.</title>
        <authorList>
            <person name="Cheng C.Y."/>
            <person name="Krishnakumar V."/>
            <person name="Chan A.P."/>
            <person name="Thibaud-Nissen F."/>
            <person name="Schobel S."/>
            <person name="Town C.D."/>
        </authorList>
    </citation>
    <scope>GENOME REANNOTATION</scope>
    <source>
        <strain>cv. Columbia</strain>
    </source>
</reference>
<reference key="3">
    <citation type="submission" date="2006-07" db="EMBL/GenBank/DDBJ databases">
        <title>Large-scale analysis of RIKEN Arabidopsis full-length (RAFL) cDNAs.</title>
        <authorList>
            <person name="Totoki Y."/>
            <person name="Seki M."/>
            <person name="Ishida J."/>
            <person name="Nakajima M."/>
            <person name="Enju A."/>
            <person name="Kamiya A."/>
            <person name="Narusaka M."/>
            <person name="Shin-i T."/>
            <person name="Nakagawa M."/>
            <person name="Sakamoto N."/>
            <person name="Oishi K."/>
            <person name="Kohara Y."/>
            <person name="Kobayashi M."/>
            <person name="Toyoda A."/>
            <person name="Sakaki Y."/>
            <person name="Sakurai T."/>
            <person name="Iida K."/>
            <person name="Akiyama K."/>
            <person name="Satou M."/>
            <person name="Toyoda T."/>
            <person name="Konagaya A."/>
            <person name="Carninci P."/>
            <person name="Kawai J."/>
            <person name="Hayashizaki Y."/>
            <person name="Shinozaki K."/>
        </authorList>
    </citation>
    <scope>NUCLEOTIDE SEQUENCE [LARGE SCALE MRNA] OF 913-1715 AND 1729-2208</scope>
    <source>
        <strain>cv. Columbia</strain>
    </source>
</reference>
<reference key="4">
    <citation type="journal article" date="2003" name="Science">
        <title>Empirical analysis of transcriptional activity in the Arabidopsis genome.</title>
        <authorList>
            <person name="Yamada K."/>
            <person name="Lim J."/>
            <person name="Dale J.M."/>
            <person name="Chen H."/>
            <person name="Shinn P."/>
            <person name="Palm C.J."/>
            <person name="Southwick A.M."/>
            <person name="Wu H.C."/>
            <person name="Kim C.J."/>
            <person name="Nguyen M."/>
            <person name="Pham P.K."/>
            <person name="Cheuk R.F."/>
            <person name="Karlin-Newmann G."/>
            <person name="Liu S.X."/>
            <person name="Lam B."/>
            <person name="Sakano H."/>
            <person name="Wu T."/>
            <person name="Yu G."/>
            <person name="Miranda M."/>
            <person name="Quach H.L."/>
            <person name="Tripp M."/>
            <person name="Chang C.H."/>
            <person name="Lee J.M."/>
            <person name="Toriumi M.J."/>
            <person name="Chan M.M."/>
            <person name="Tang C.C."/>
            <person name="Onodera C.S."/>
            <person name="Deng J.M."/>
            <person name="Akiyama K."/>
            <person name="Ansari Y."/>
            <person name="Arakawa T."/>
            <person name="Banh J."/>
            <person name="Banno F."/>
            <person name="Bowser L."/>
            <person name="Brooks S.Y."/>
            <person name="Carninci P."/>
            <person name="Chao Q."/>
            <person name="Choy N."/>
            <person name="Enju A."/>
            <person name="Goldsmith A.D."/>
            <person name="Gurjal M."/>
            <person name="Hansen N.F."/>
            <person name="Hayashizaki Y."/>
            <person name="Johnson-Hopson C."/>
            <person name="Hsuan V.W."/>
            <person name="Iida K."/>
            <person name="Karnes M."/>
            <person name="Khan S."/>
            <person name="Koesema E."/>
            <person name="Ishida J."/>
            <person name="Jiang P.X."/>
            <person name="Jones T."/>
            <person name="Kawai J."/>
            <person name="Kamiya A."/>
            <person name="Meyers C."/>
            <person name="Nakajima M."/>
            <person name="Narusaka M."/>
            <person name="Seki M."/>
            <person name="Sakurai T."/>
            <person name="Satou M."/>
            <person name="Tamse R."/>
            <person name="Vaysberg M."/>
            <person name="Wallender E.K."/>
            <person name="Wong C."/>
            <person name="Yamamura Y."/>
            <person name="Yuan S."/>
            <person name="Shinozaki K."/>
            <person name="Davis R.W."/>
            <person name="Theologis A."/>
            <person name="Ecker J.R."/>
        </authorList>
    </citation>
    <scope>NUCLEOTIDE SEQUENCE [LARGE SCALE MRNA] OF 1867-2208</scope>
    <source>
        <strain>cv. Columbia</strain>
    </source>
</reference>
<reference key="5">
    <citation type="journal article" date="2002" name="Plant J.">
        <title>Arabidopsis glt1-T mutant defines a role for NADH-GOGAT in the non-photorespiratory ammonium assimilatory pathway.</title>
        <authorList>
            <person name="Lancien M."/>
            <person name="Martin M."/>
            <person name="Hsieh M.H."/>
            <person name="Leustek T."/>
            <person name="Goodman H."/>
            <person name="Coruzzi G.M."/>
        </authorList>
    </citation>
    <scope>FUNCTION</scope>
    <scope>TISSUE SPECIFICITY</scope>
    <scope>DISRUPTION PHENOTYPE</scope>
</reference>
<reference key="6">
    <citation type="journal article" date="2006" name="Proteomics">
        <title>The early responses of Arabidopsis thaliana cells to cadmium exposure explored by protein and metabolite profiling analyses.</title>
        <authorList>
            <person name="Sarry J.-E."/>
            <person name="Kuhn L."/>
            <person name="Ducruix C."/>
            <person name="Lafaye A."/>
            <person name="Junot C."/>
            <person name="Hugouvieux V."/>
            <person name="Jourdain A."/>
            <person name="Bastien O."/>
            <person name="Fievet J.B."/>
            <person name="Vailhen D."/>
            <person name="Amekraz B."/>
            <person name="Moulin C."/>
            <person name="Ezan E."/>
            <person name="Garin J."/>
            <person name="Bourguignon J."/>
        </authorList>
    </citation>
    <scope>INDUCTION BY CADMIUM</scope>
    <source>
        <strain>cv. Columbia</strain>
    </source>
</reference>
<reference key="7">
    <citation type="journal article" date="2007" name="Mol. Cell. Proteomics">
        <title>Multidimensional protein identification technology (MudPIT) analysis of ubiquitinated proteins in plants.</title>
        <authorList>
            <person name="Maor R."/>
            <person name="Jones A."/>
            <person name="Nuehse T.S."/>
            <person name="Studholme D.J."/>
            <person name="Peck S.C."/>
            <person name="Shirasu K."/>
        </authorList>
    </citation>
    <scope>IDENTIFICATION BY MASS SPECTROMETRY [LARGE SCALE ANALYSIS]</scope>
    <source>
        <strain>cv. Landsberg erecta</strain>
    </source>
</reference>
<reference key="8">
    <citation type="journal article" date="2008" name="PLoS ONE">
        <title>Sorting signals, N-terminal modifications and abundance of the chloroplast proteome.</title>
        <authorList>
            <person name="Zybailov B."/>
            <person name="Rutschow H."/>
            <person name="Friso G."/>
            <person name="Rudella A."/>
            <person name="Emanuelsson O."/>
            <person name="Sun Q."/>
            <person name="van Wijk K.J."/>
        </authorList>
    </citation>
    <scope>IDENTIFICATION BY MASS SPECTROMETRY</scope>
    <scope>SUBCELLULAR LOCATION [LARGE SCALE ANALYSIS]</scope>
</reference>
<gene>
    <name type="primary">GLT1</name>
    <name type="ordered locus">At5g53460</name>
    <name type="ORF">MYN8.7</name>
</gene>